<feature type="signal peptide" evidence="1">
    <location>
        <begin position="1"/>
        <end position="22"/>
    </location>
</feature>
<feature type="chain" id="PRO_0000037152" description="Hemagglutinin-esterase" evidence="1">
    <location>
        <begin position="23"/>
        <end position="439"/>
    </location>
</feature>
<feature type="topological domain" description="Virion surface" evidence="1">
    <location>
        <begin position="23"/>
        <end position="407"/>
    </location>
</feature>
<feature type="transmembrane region" description="Helical" evidence="1">
    <location>
        <begin position="408"/>
        <end position="428"/>
    </location>
</feature>
<feature type="topological domain" description="Intravirion" evidence="1">
    <location>
        <begin position="429"/>
        <end position="439"/>
    </location>
</feature>
<feature type="region of interest" description="Esterase domain 1" evidence="1">
    <location>
        <begin position="12"/>
        <end position="132"/>
    </location>
</feature>
<feature type="region of interest" description="Receptor binding" evidence="1">
    <location>
        <begin position="133"/>
        <end position="281"/>
    </location>
</feature>
<feature type="region of interest" description="Esterase domain 2" evidence="1">
    <location>
        <begin position="282"/>
        <end position="395"/>
    </location>
</feature>
<feature type="active site" description="Nucleophile" evidence="1">
    <location>
        <position position="45"/>
    </location>
</feature>
<feature type="active site" description="Charge relay system" evidence="1">
    <location>
        <position position="342"/>
    </location>
</feature>
<feature type="active site" description="Charge relay system" evidence="1">
    <location>
        <position position="345"/>
    </location>
</feature>
<feature type="glycosylation site" description="N-linked (GlcNAc...) asparagine; by host" evidence="1">
    <location>
        <position position="94"/>
    </location>
</feature>
<feature type="glycosylation site" description="N-linked (GlcNAc...) asparagine; by host" evidence="1">
    <location>
        <position position="196"/>
    </location>
</feature>
<feature type="glycosylation site" description="N-linked (GlcNAc...) asparagine; by host" evidence="1">
    <location>
        <position position="246"/>
    </location>
</feature>
<feature type="glycosylation site" description="N-linked (GlcNAc...) asparagine; by host" evidence="1">
    <location>
        <position position="309"/>
    </location>
</feature>
<feature type="glycosylation site" description="N-linked (GlcNAc...) asparagine; by host" evidence="1">
    <location>
        <position position="316"/>
    </location>
</feature>
<feature type="glycosylation site" description="N-linked (GlcNAc...) asparagine; by host" evidence="1">
    <location>
        <position position="331"/>
    </location>
</feature>
<feature type="glycosylation site" description="N-linked (GlcNAc...) asparagine; by host" evidence="1">
    <location>
        <position position="360"/>
    </location>
</feature>
<feature type="glycosylation site" description="N-linked (GlcNAc...) asparagine; by host" evidence="1">
    <location>
        <position position="374"/>
    </location>
</feature>
<feature type="disulfide bond" evidence="1">
    <location>
        <begin position="49"/>
        <end position="70"/>
    </location>
</feature>
<feature type="disulfide bond" evidence="1">
    <location>
        <begin position="118"/>
        <end position="167"/>
    </location>
</feature>
<feature type="disulfide bond" evidence="1">
    <location>
        <begin position="202"/>
        <end position="291"/>
    </location>
</feature>
<feature type="disulfide bond" evidence="1">
    <location>
        <begin position="210"/>
        <end position="264"/>
    </location>
</feature>
<feature type="disulfide bond" evidence="1">
    <location>
        <begin position="322"/>
        <end position="327"/>
    </location>
</feature>
<feature type="disulfide bond" evidence="1">
    <location>
        <begin position="363"/>
        <end position="387"/>
    </location>
</feature>
<organism>
    <name type="scientific">Rat coronavirus (strain 681)</name>
    <name type="common">RCV-SDAV</name>
    <name type="synonym">Sialodacryoadenitis virus SDAV-681</name>
    <dbReference type="NCBI Taxonomy" id="33740"/>
    <lineage>
        <taxon>Viruses</taxon>
        <taxon>Riboviria</taxon>
        <taxon>Orthornavirae</taxon>
        <taxon>Pisuviricota</taxon>
        <taxon>Pisoniviricetes</taxon>
        <taxon>Nidovirales</taxon>
        <taxon>Cornidovirineae</taxon>
        <taxon>Coronaviridae</taxon>
        <taxon>Orthocoronavirinae</taxon>
        <taxon>Betacoronavirus</taxon>
        <taxon>Embecovirus</taxon>
        <taxon>Murine coronavirus</taxon>
    </lineage>
</organism>
<evidence type="ECO:0000255" key="1">
    <source>
        <dbReference type="HAMAP-Rule" id="MF_04207"/>
    </source>
</evidence>
<gene>
    <name evidence="1" type="primary">HE</name>
</gene>
<accession>Q9IKD2</accession>
<name>HEMA_CVRSD</name>
<dbReference type="EC" id="3.1.1.53" evidence="1"/>
<dbReference type="EMBL" id="AF207551">
    <property type="protein sequence ID" value="AAF97737.1"/>
    <property type="molecule type" value="Genomic_RNA"/>
</dbReference>
<dbReference type="SMR" id="Q9IKD2"/>
<dbReference type="GlyCosmos" id="Q9IKD2">
    <property type="glycosylation" value="8 sites, No reported glycans"/>
</dbReference>
<dbReference type="GO" id="GO:0020002">
    <property type="term" value="C:host cell plasma membrane"/>
    <property type="evidence" value="ECO:0007669"/>
    <property type="project" value="UniProtKB-SubCell"/>
</dbReference>
<dbReference type="GO" id="GO:0016020">
    <property type="term" value="C:membrane"/>
    <property type="evidence" value="ECO:0007669"/>
    <property type="project" value="UniProtKB-UniRule"/>
</dbReference>
<dbReference type="GO" id="GO:0019031">
    <property type="term" value="C:viral envelope"/>
    <property type="evidence" value="ECO:0007669"/>
    <property type="project" value="UniProtKB-UniRule"/>
</dbReference>
<dbReference type="GO" id="GO:0055036">
    <property type="term" value="C:virion membrane"/>
    <property type="evidence" value="ECO:0007669"/>
    <property type="project" value="UniProtKB-SubCell"/>
</dbReference>
<dbReference type="GO" id="GO:0046789">
    <property type="term" value="F:host cell surface receptor binding"/>
    <property type="evidence" value="ECO:0007669"/>
    <property type="project" value="UniProtKB-UniRule"/>
</dbReference>
<dbReference type="GO" id="GO:0106331">
    <property type="term" value="F:sialate 4-O-acetylesterase activity"/>
    <property type="evidence" value="ECO:0007669"/>
    <property type="project" value="RHEA"/>
</dbReference>
<dbReference type="GO" id="GO:0106330">
    <property type="term" value="F:sialate 9-O-acetylesterase activity"/>
    <property type="evidence" value="ECO:0007669"/>
    <property type="project" value="RHEA"/>
</dbReference>
<dbReference type="GO" id="GO:0019064">
    <property type="term" value="P:fusion of virus membrane with host plasma membrane"/>
    <property type="evidence" value="ECO:0007669"/>
    <property type="project" value="UniProtKB-UniRule"/>
</dbReference>
<dbReference type="HAMAP" id="MF_04207">
    <property type="entry name" value="BETA_CORONA_HE"/>
    <property type="match status" value="1"/>
</dbReference>
<dbReference type="InterPro" id="IPR008980">
    <property type="entry name" value="Capsid_hemagglutn"/>
</dbReference>
<dbReference type="InterPro" id="IPR042545">
    <property type="entry name" value="HEMA"/>
</dbReference>
<dbReference type="InterPro" id="IPR007142">
    <property type="entry name" value="Hemagglutn-estrase_core"/>
</dbReference>
<dbReference type="InterPro" id="IPR003860">
    <property type="entry name" value="Hemagglutn-estrase_hemagglutn"/>
</dbReference>
<dbReference type="Pfam" id="PF03996">
    <property type="entry name" value="Hema_esterase"/>
    <property type="match status" value="1"/>
</dbReference>
<dbReference type="Pfam" id="PF02710">
    <property type="entry name" value="Hema_HEFG"/>
    <property type="match status" value="1"/>
</dbReference>
<dbReference type="SUPFAM" id="SSF52266">
    <property type="entry name" value="SGNH hydrolase"/>
    <property type="match status" value="1"/>
</dbReference>
<dbReference type="SUPFAM" id="SSF49818">
    <property type="entry name" value="Viral protein domain"/>
    <property type="match status" value="1"/>
</dbReference>
<proteinExistence type="inferred from homology"/>
<comment type="function">
    <text evidence="1">Structural protein that makes short spikes at the surface of the virus. Contains receptor binding and receptor-destroying activities. Mediates de-O-acetylation of N-acetyl-4-O-acetylneuraminic acid, which is probably the receptor determinant recognized by the virus on the surface of erythrocytes and susceptible cells. This receptor-destroying activity is important for virus release as it probably helps preventing self-aggregation and ensures the efficient spread of the progeny virus from cell to cell. May serve as a secondary viral attachment protein for initiating infection, the spike protein being the major one. May become a target for both the humoral and the cellular branches of the immune system.</text>
</comment>
<comment type="catalytic activity">
    <reaction evidence="1">
        <text>N-acetyl-9-O-acetylneuraminate + H2O = N-acetylneuraminate + acetate + H(+)</text>
        <dbReference type="Rhea" id="RHEA:22600"/>
        <dbReference type="ChEBI" id="CHEBI:15377"/>
        <dbReference type="ChEBI" id="CHEBI:15378"/>
        <dbReference type="ChEBI" id="CHEBI:28999"/>
        <dbReference type="ChEBI" id="CHEBI:30089"/>
        <dbReference type="ChEBI" id="CHEBI:35418"/>
        <dbReference type="EC" id="3.1.1.53"/>
    </reaction>
</comment>
<comment type="catalytic activity">
    <reaction evidence="1">
        <text>N-acetyl-4-O-acetylneuraminate + H2O = N-acetylneuraminate + acetate + H(+)</text>
        <dbReference type="Rhea" id="RHEA:25564"/>
        <dbReference type="ChEBI" id="CHEBI:15377"/>
        <dbReference type="ChEBI" id="CHEBI:15378"/>
        <dbReference type="ChEBI" id="CHEBI:29006"/>
        <dbReference type="ChEBI" id="CHEBI:30089"/>
        <dbReference type="ChEBI" id="CHEBI:35418"/>
        <dbReference type="EC" id="3.1.1.53"/>
    </reaction>
</comment>
<comment type="subunit">
    <text evidence="1">Homodimer; disulfide-linked. Forms a complex with the M protein in the pre-Golgi. Associates then with S-M complex to form a ternary complex S-M-HE.</text>
</comment>
<comment type="subcellular location">
    <subcellularLocation>
        <location evidence="1">Virion membrane</location>
        <topology evidence="1">Single-pass type I membrane protein</topology>
    </subcellularLocation>
    <subcellularLocation>
        <location evidence="1">Host cell membrane</location>
        <topology evidence="1">Single-pass type I membrane protein</topology>
    </subcellularLocation>
    <text evidence="1">In infected cells becomes incorporated into the envelope of virions during virus assembly at the endoplasmic reticulum and cis Golgi. However, some may escape incorporation into virions and subsequently migrate to the cell surface.</text>
</comment>
<comment type="PTM">
    <text evidence="1">N-glycosylated in the host RER.</text>
</comment>
<comment type="similarity">
    <text evidence="1">Belongs to the influenza type C/coronaviruses hemagglutinin-esterase family.</text>
</comment>
<sequence>MGRMCIAMAPRTLLLLIGCQLVFGFNEPINIVSHLNDDWFLFGDSRSDCTYVENNGHPKLDWLDLDPKLCNSGKIAAKSGNSLFRSFHFTDFYNYTGEGDQIIFYEGVSFSPSHGFKCLVEGDNNKWMGNKARFYALLYKKMAQYRSLSFVTVPYAYGGNAKPTSICKDKTLTLNNPTFISKESNYVDYYYVSEANFTLQGCDEFIVPLCVFNGHSRGSSSDPANKYYTDSQSYYNIDTGVLYGFNSTLDVGNTAQNPGLDLTCMYLVLTPGNYKAVSLEYLLTIPSKAICLRKPKRFMPVQVVDSRWNSTRQSDNMTAVACQLPYCFFRNTSADYSGDTHDVHHGDFYFRQLLSGLLYNVSCIAQQGAFLYNNVSSIWPVYGYGHCPTAANIGYMAPVCLYDPLPVILLGVLLGIAVLIIVFLILYFMADSSVRLHEA</sequence>
<protein>
    <recommendedName>
        <fullName evidence="1">Hemagglutinin-esterase</fullName>
        <shortName evidence="1">HE protein</shortName>
        <ecNumber evidence="1">3.1.1.53</ecNumber>
    </recommendedName>
    <alternativeName>
        <fullName evidence="1">E3 glycoprotein</fullName>
    </alternativeName>
</protein>
<keyword id="KW-1015">Disulfide bond</keyword>
<keyword id="KW-0325">Glycoprotein</keyword>
<keyword id="KW-0348">Hemagglutinin</keyword>
<keyword id="KW-1032">Host cell membrane</keyword>
<keyword id="KW-1043">Host membrane</keyword>
<keyword id="KW-0378">Hydrolase</keyword>
<keyword id="KW-0472">Membrane</keyword>
<keyword id="KW-0732">Signal</keyword>
<keyword id="KW-0812">Transmembrane</keyword>
<keyword id="KW-1133">Transmembrane helix</keyword>
<keyword id="KW-0261">Viral envelope protein</keyword>
<keyword id="KW-0946">Virion</keyword>
<organismHost>
    <name type="scientific">Rattus norvegicus</name>
    <name type="common">Rat</name>
    <dbReference type="NCBI Taxonomy" id="10116"/>
</organismHost>
<reference key="1">
    <citation type="journal article" date="2000" name="Clin. Diagn. Lab. Immunol.">
        <title>Primary structure of the sialodacryoadenitis virus genome: sequence of the structural-protein region and its application for differential diagnosis.</title>
        <authorList>
            <person name="Yoo D."/>
            <person name="Pei Y."/>
            <person name="Christie N."/>
            <person name="Cooper M."/>
        </authorList>
    </citation>
    <scope>NUCLEOTIDE SEQUENCE [GENOMIC RNA]</scope>
</reference>